<feature type="signal peptide" evidence="6 7">
    <location>
        <begin position="1"/>
        <end position="46"/>
    </location>
</feature>
<feature type="chain" id="PRO_0000041539" description="Vitellogenin-A1">
    <location>
        <begin position="47"/>
        <end position="2169"/>
    </location>
</feature>
<feature type="chain" id="PRO_0000041540" description="Vitellin light chain">
    <location>
        <begin position="47"/>
        <end position="485"/>
    </location>
</feature>
<feature type="chain" id="PRO_0000041541" description="Vitellin heavy chain">
    <location>
        <begin position="490"/>
        <end position="2169"/>
    </location>
</feature>
<feature type="domain" description="Vitellogenin" evidence="2">
    <location>
        <begin position="116"/>
        <end position="1008"/>
    </location>
</feature>
<feature type="domain" description="VWFD" evidence="3">
    <location>
        <begin position="1770"/>
        <end position="1979"/>
    </location>
</feature>
<feature type="region of interest" description="Disordered" evidence="4">
    <location>
        <begin position="426"/>
        <end position="481"/>
    </location>
</feature>
<feature type="region of interest" description="Disordered" evidence="4">
    <location>
        <begin position="514"/>
        <end position="570"/>
    </location>
</feature>
<feature type="region of interest" description="Disordered" evidence="4">
    <location>
        <begin position="2026"/>
        <end position="2081"/>
    </location>
</feature>
<feature type="compositionally biased region" description="Low complexity" evidence="4">
    <location>
        <begin position="438"/>
        <end position="461"/>
    </location>
</feature>
<feature type="compositionally biased region" description="Low complexity" evidence="4">
    <location>
        <begin position="517"/>
        <end position="531"/>
    </location>
</feature>
<feature type="compositionally biased region" description="Low complexity" evidence="4">
    <location>
        <begin position="541"/>
        <end position="570"/>
    </location>
</feature>
<feature type="compositionally biased region" description="Low complexity" evidence="4">
    <location>
        <begin position="2026"/>
        <end position="2063"/>
    </location>
</feature>
<feature type="compositionally biased region" description="Basic and acidic residues" evidence="4">
    <location>
        <begin position="2064"/>
        <end position="2079"/>
    </location>
</feature>
<feature type="modified residue" description="Sulfotyrosine" evidence="1">
    <location>
        <position position="159"/>
    </location>
</feature>
<feature type="modified residue" description="Sulfotyrosine" evidence="1">
    <location>
        <position position="163"/>
    </location>
</feature>
<feature type="modified residue" description="Sulfotyrosine" evidence="1">
    <location>
        <position position="1067"/>
    </location>
</feature>
<feature type="modified residue" description="Sulfotyrosine" evidence="1">
    <location>
        <position position="1070"/>
    </location>
</feature>
<feature type="modified residue" description="Sulfotyrosine" evidence="1">
    <location>
        <position position="1074"/>
    </location>
</feature>
<feature type="modified residue" description="Sulfotyrosine" evidence="1">
    <location>
        <position position="1563"/>
    </location>
</feature>
<feature type="modified residue" description="Sulfotyrosine" evidence="1">
    <location>
        <position position="1564"/>
    </location>
</feature>
<feature type="modified residue" description="Sulfotyrosine" evidence="1">
    <location>
        <position position="1570"/>
    </location>
</feature>
<feature type="modified residue" description="Sulfotyrosine" evidence="1">
    <location>
        <position position="1737"/>
    </location>
</feature>
<feature type="modified residue" description="Sulfotyrosine" evidence="1">
    <location>
        <position position="1806"/>
    </location>
</feature>
<feature type="modified residue" description="Sulfotyrosine" evidence="1">
    <location>
        <position position="1809"/>
    </location>
</feature>
<feature type="modified residue" description="Sulfotyrosine" evidence="1">
    <location>
        <position position="1822"/>
    </location>
</feature>
<feature type="modified residue" description="Sulfotyrosine" evidence="1">
    <location>
        <position position="1824"/>
    </location>
</feature>
<feature type="modified residue" description="Sulfotyrosine" evidence="1">
    <location>
        <position position="1888"/>
    </location>
</feature>
<feature type="glycosylation site" description="N-linked (GlcNAc...) asparagine" evidence="1">
    <location>
        <position position="107"/>
    </location>
</feature>
<feature type="glycosylation site" description="N-linked (GlcNAc...) asparagine" evidence="1">
    <location>
        <position position="125"/>
    </location>
</feature>
<feature type="glycosylation site" description="N-linked (GlcNAc...) asparagine" evidence="1">
    <location>
        <position position="360"/>
    </location>
</feature>
<feature type="glycosylation site" description="N-linked (GlcNAc...) asparagine" evidence="1">
    <location>
        <position position="391"/>
    </location>
</feature>
<feature type="glycosylation site" description="N-linked (GlcNAc...) asparagine" evidence="1">
    <location>
        <position position="435"/>
    </location>
</feature>
<feature type="glycosylation site" description="N-linked (GlcNAc...) asparagine" evidence="1">
    <location>
        <position position="514"/>
    </location>
</feature>
<feature type="glycosylation site" description="N-linked (GlcNAc...) asparagine" evidence="1">
    <location>
        <position position="538"/>
    </location>
</feature>
<feature type="glycosylation site" description="N-linked (GlcNAc...) asparagine" evidence="1">
    <location>
        <position position="587"/>
    </location>
</feature>
<feature type="glycosylation site" description="N-linked (GlcNAc...) asparagine" evidence="1">
    <location>
        <position position="763"/>
    </location>
</feature>
<feature type="glycosylation site" description="N-linked (GlcNAc...) asparagine" evidence="1">
    <location>
        <position position="781"/>
    </location>
</feature>
<feature type="glycosylation site" description="N-linked (GlcNAc...) asparagine" evidence="1">
    <location>
        <position position="1140"/>
    </location>
</feature>
<feature type="glycosylation site" description="N-linked (GlcNAc...) asparagine" evidence="1">
    <location>
        <position position="1233"/>
    </location>
</feature>
<feature type="glycosylation site" description="N-linked (GlcNAc...) asparagine" evidence="1">
    <location>
        <position position="1336"/>
    </location>
</feature>
<feature type="glycosylation site" description="N-linked (GlcNAc...) asparagine" evidence="1">
    <location>
        <position position="1652"/>
    </location>
</feature>
<feature type="glycosylation site" description="N-linked (GlcNAc...) asparagine" evidence="1">
    <location>
        <position position="1696"/>
    </location>
</feature>
<feature type="glycosylation site" description="N-linked (GlcNAc...) asparagine" evidence="1">
    <location>
        <position position="1977"/>
    </location>
</feature>
<feature type="disulfide bond" evidence="3">
    <location>
        <begin position="1772"/>
        <end position="1942"/>
    </location>
</feature>
<feature type="disulfide bond" evidence="3">
    <location>
        <begin position="1794"/>
        <end position="1978"/>
    </location>
</feature>
<feature type="sequence conflict" description="In Ref. 1; AA sequence." evidence="8" ref="1">
    <original>S</original>
    <variation>A</variation>
    <location>
        <position position="52"/>
    </location>
</feature>
<feature type="sequence conflict" description="In Ref. 1; AAA99486." evidence="8" ref="1">
    <original>G</original>
    <variation>GYDAGYKGYG</variation>
    <location>
        <position position="71"/>
    </location>
</feature>
<feature type="sequence conflict" description="In Ref. 1; AAA99486 and 3; AAA18221." evidence="8" ref="1 3">
    <original>Y</original>
    <variation>H</variation>
    <location>
        <position position="178"/>
    </location>
</feature>
<feature type="sequence conflict" description="In Ref. 1; AAA99486 and 3; AAA18221." evidence="8" ref="1 3">
    <original>G</original>
    <variation>D</variation>
    <location>
        <position position="303"/>
    </location>
</feature>
<feature type="sequence conflict" description="In Ref. 1; AAA99486 and 3; AAA18221." evidence="8" ref="1 3">
    <original>D</original>
    <variation>N</variation>
    <location>
        <position position="636"/>
    </location>
</feature>
<feature type="sequence conflict" description="In Ref. 1; AAA99486 and 3; AAA18221." evidence="8" ref="1 3">
    <original>S</original>
    <variation>A</variation>
    <location>
        <position position="640"/>
    </location>
</feature>
<feature type="sequence conflict" description="In Ref. 1; AAA99486." evidence="8" ref="1">
    <original>S</original>
    <variation>R</variation>
    <location>
        <position position="927"/>
    </location>
</feature>
<feature type="sequence conflict" description="In Ref. 1; AAA99486 and 3; AAA18221." evidence="8" ref="1 3">
    <original>I</original>
    <variation>L</variation>
    <location>
        <position position="955"/>
    </location>
</feature>
<feature type="sequence conflict" description="In Ref. 1; AAA99486 and 3; AAA18221." evidence="8" ref="1 3">
    <original>V</original>
    <variation>I</variation>
    <location>
        <position position="1375"/>
    </location>
</feature>
<feature type="sequence conflict" description="In Ref. 1; AAA99486." evidence="8" ref="1">
    <original>Y</original>
    <variation>F</variation>
    <location>
        <position position="1415"/>
    </location>
</feature>
<feature type="sequence conflict" description="In Ref. 1; AAA99486." evidence="8" ref="1">
    <original>Y</original>
    <variation>C</variation>
    <location>
        <position position="1597"/>
    </location>
</feature>
<feature type="sequence conflict" description="In Ref. 1; AAA99486 and 3; AAA18221." evidence="8" ref="1 3">
    <original>A</original>
    <variation>S</variation>
    <location>
        <position position="1743"/>
    </location>
</feature>
<feature type="sequence conflict" description="In Ref. 1; AAA99486 and 3; AAA18221." evidence="8" ref="1 3">
    <original>V</original>
    <variation>I</variation>
    <location>
        <position position="1762"/>
    </location>
</feature>
<feature type="sequence conflict" description="In Ref. 1; AAA99486." evidence="8" ref="1">
    <original>Y</original>
    <variation>N</variation>
    <location>
        <position position="1778"/>
    </location>
</feature>
<feature type="sequence conflict" description="In Ref. 1; AAA99486 and 3; AAA18221." evidence="8" ref="1 3">
    <original>I</original>
    <variation>V</variation>
    <location>
        <position position="1866"/>
    </location>
</feature>
<feature type="sequence conflict" description="In Ref. 1; AAA99486." evidence="8" ref="1">
    <original>P</original>
    <variation>A</variation>
    <location>
        <position position="1956"/>
    </location>
</feature>
<feature type="sequence conflict" description="In Ref. 1; AAA99486 and 3; AAA18221." evidence="8" ref="1 3">
    <original>S</original>
    <variation>F</variation>
    <location>
        <position position="2048"/>
    </location>
</feature>
<feature type="sequence conflict" description="In Ref. 1; AAA99486 and 3; AAA18221." evidence="8" ref="1 3">
    <original>R</original>
    <variation>L</variation>
    <location>
        <position position="2051"/>
    </location>
</feature>
<feature type="sequence conflict" description="In Ref. 1; AAA99486." evidence="8" ref="1">
    <original>S</original>
    <variation>G</variation>
    <location>
        <position position="2052"/>
    </location>
</feature>
<feature type="sequence conflict" description="In Ref. 1; AAA99486 and 3; AAA18221." evidence="8" ref="1 3">
    <original>T</original>
    <variation>I</variation>
    <location>
        <position position="2096"/>
    </location>
</feature>
<feature type="sequence conflict" description="In Ref. 1; AAA99486 and 3; AAA18221." evidence="8" ref="1 3">
    <original>V</original>
    <variation>A</variation>
    <location>
        <position position="2111"/>
    </location>
</feature>
<feature type="sequence conflict" description="In Ref. 1; AAA99486 and 3; AAA18221." evidence="8" ref="1 3">
    <original>D</original>
    <variation>E</variation>
    <location>
        <position position="2138"/>
    </location>
</feature>
<evidence type="ECO:0000255" key="1"/>
<evidence type="ECO:0000255" key="2">
    <source>
        <dbReference type="PROSITE-ProRule" id="PRU00557"/>
    </source>
</evidence>
<evidence type="ECO:0000255" key="3">
    <source>
        <dbReference type="PROSITE-ProRule" id="PRU00580"/>
    </source>
</evidence>
<evidence type="ECO:0000256" key="4">
    <source>
        <dbReference type="SAM" id="MobiDB-lite"/>
    </source>
</evidence>
<evidence type="ECO:0000269" key="5">
    <source>
    </source>
</evidence>
<evidence type="ECO:0000269" key="6">
    <source>
    </source>
</evidence>
<evidence type="ECO:0000269" key="7">
    <source>
    </source>
</evidence>
<evidence type="ECO:0000305" key="8"/>
<proteinExistence type="evidence at protein level"/>
<keyword id="KW-0165">Cleavage on pair of basic residues</keyword>
<keyword id="KW-0903">Direct protein sequencing</keyword>
<keyword id="KW-1015">Disulfide bond</keyword>
<keyword id="KW-0325">Glycoprotein</keyword>
<keyword id="KW-0597">Phosphoprotein</keyword>
<keyword id="KW-1185">Reference proteome</keyword>
<keyword id="KW-0732">Signal</keyword>
<keyword id="KW-0758">Storage protein</keyword>
<keyword id="KW-0765">Sulfation</keyword>
<protein>
    <recommendedName>
        <fullName>Vitellogenin-A1</fullName>
        <shortName>VG</shortName>
    </recommendedName>
    <alternativeName>
        <fullName>PVG1</fullName>
    </alternativeName>
    <component>
        <recommendedName>
            <fullName>Vitellin light chain</fullName>
            <shortName>VL</shortName>
        </recommendedName>
    </component>
    <component>
        <recommendedName>
            <fullName>Vitellin heavy chain</fullName>
            <shortName>VH</shortName>
        </recommendedName>
    </component>
</protein>
<accession>Q16927</accession>
<accession>Q16892</accession>
<accession>Q16T05</accession>
<name>VIT1_AEDAE</name>
<sequence>MATDGITSRFGFNERRRTHNRNSCRILEDKMLAKLLLLALAGLTAAYQYENSFKGYNPGYKGYDAGYKGYGYDAGYKYNNQGYSYKNGFEYGYQNAYQAAFYKHRPNVTEFEFSSWMPNYEYVYNVTSKTMTALAELDDQWTGVFTRAYLVIRPKSRDYVVAYVKQPEYAVFNERLPYGYATKFYHDMFKFQPMPMSSKPFGIRYHKGAIKGLYVEKTIPNNEVNILKAWISQLQVDTRGANLMHSSKPIHPSKNEWNGHYKVMEPLVTGECETHYDVNLIPAYMIQAHKQWVPQGQLRGEDGQFIQVTKTQNFDRCDQRMGYHFGFTGYSDFRPNTNQMGNVASKSLVSYMYLTGNWYNFTIQSSSMINKVAIAPSLVNKEPALVYAQVNMTLNDVHPYDKVPMGPAEDLKVFVDLVYSYNMPSDKKNYVRPGNETSSSSSSSSSSSSSSSESSSSSSESVENPKISPVEQYKPLLDKVEKRGNRYRRDLNAIKEKKYYEAYKMDQYRLHRLNDTSSDSSSSDSSSSSSSESKEHRNGTSSYSSSSSSSSSSSSSESSSYSSSSSSSSESYSISSEEYYYQPTPANFSYAPEAPFLPFFTGYKGYNIFYARNVDAIRSVGKLVEEIASDLENPSDLPKSNTMSKFNILTRAIRAMGYEDIYELAQKYFVSQKERQVAQFSDKKFSKRVDAWVTLRDAVAEAGTPSAFKLIFDFIKEKKLRGYEAATVIASLAQSIRYPTEHLLHEFFLLVTSDVVLHQEYLNATALFAYSNFVNQAHVSNRSAYNYYPVFSFGRLADADYKIIEHKIVPWFAHQLREAVNEGDSVKIQVYIRSLGNLGHPQILSVFEPYLEGTIQITDFQRLAIMVALDNLVIYYPSLARSVLYRAYQNTADVHEVRCAAVHLLMRTDPPADMLQRMAEFTHHDPSLYVRAAVKSAIETAALADDYDEDSKLAINAKAAINFLNPEDVSIQYSFNHIRDYALENLELSYRLHYGEIASNDHRYPSGLFYHLRQNFGGFKKYTSFYYLVSSMEAFFDIFKKQYNTKYFADYYKSADYSTNYYNFDKYSKYYKQYYYSKDSEYYQKFYGQKKDYYNDKEPFKFTAPRIAKLLNIDAEEAEQLEGQLLFKLFNGYFFTAFDNQTIENLPHKMRHLFENLEDGYAFDVTKFYQQQDVVLAWPLATGFPFIYTLKAPTVFKFEVDASAKTHPQVYKMPAGHPETENDDFFYMPQSINGSVDVNLLYHRMVDAKVGFVTPFDHQRYIAGYQKKLHGYLPFNVELGLDFVKDEYEFEFKFLEPKDDHLLFHMSSWPYTGYKDITDMRPIAENPNAKIVHDDNQSTKTMEHTFGQDMTGVALRFHAKYDFDLINFQQFWSLVQKNDFVSAVNYPFAYQPYEYHQFNLFYDSQRTHAKSFKFYAYQKFGAPSFEETGPKHPANRHSYSGNYYESNYAQPFVYSPGSQRRYEQFFRNAASGIRNSFVRYYDFGFEFYAPQYKSEFTFTTAFADSPVDKTSRQLYYFYASPMFPSQSYFKDIPFSGKQFQFCATATSEFPRVPYLKFSDFDKYYGDASQYFDFLYGESCQGGAHIAVKGKQKQTGKYREYLRFSDVAKACKEQMANGYYQFEECQQAIDQAYYYDFYDYAIEYKDVGSVAKNLTNKFYNYFQYAFYPYFESNFFYHGKSNYIKAEFEFAPYGDYYNASFFGPSYAFQVQNYPVFNDYSTYFPYFFKYTFFPRYQPYYMHRLPAHKPRNRPYYELSNYEQFAVFDRKPQYPSCSFSNDYFYTFDNKKYFYDMGECWHAVMYTVKPDYDFYAQQSHFYNSDFEYKYKNGFEEYEQFAALARRGSDNQLYFKFLFGDNYIEVFPNNGGIPFVKYNGRPYDISKSNIAHFEYKEGYPSFPFFYAFAYPNKDLEVSFFGGKLKFATDGYRARFFSDYSFYNNFVGLCGTNNGEYFDEFVTPDQCYMRKPEFFAASYAITGQNCTGPAKAFNYAYQQKAKQECVKREVYYGDIIYNQEYYHPRYRYYNHNVEESSSSSSSSSSDSSSSSSSSESSSRSRSGSSSSSSSSEEQKEFHPHKQEHSMKECPVQHQHQFFEQGDRTCFSLRPLPVCHSKCVATEKISKYFDVHCFEKDSTQAKKYKSDIGRGYTPDFKSFAPHKTYKFNYPKSCVYKAY</sequence>
<organism>
    <name type="scientific">Aedes aegypti</name>
    <name type="common">Yellowfever mosquito</name>
    <name type="synonym">Culex aegypti</name>
    <dbReference type="NCBI Taxonomy" id="7159"/>
    <lineage>
        <taxon>Eukaryota</taxon>
        <taxon>Metazoa</taxon>
        <taxon>Ecdysozoa</taxon>
        <taxon>Arthropoda</taxon>
        <taxon>Hexapoda</taxon>
        <taxon>Insecta</taxon>
        <taxon>Pterygota</taxon>
        <taxon>Neoptera</taxon>
        <taxon>Endopterygota</taxon>
        <taxon>Diptera</taxon>
        <taxon>Nematocera</taxon>
        <taxon>Culicoidea</taxon>
        <taxon>Culicidae</taxon>
        <taxon>Culicinae</taxon>
        <taxon>Aedini</taxon>
        <taxon>Aedes</taxon>
        <taxon>Stegomyia</taxon>
    </lineage>
</organism>
<comment type="function">
    <text>Precursor of the egg-yolk proteins that are sources of nutrients during embryonic development. May supply aromatic amino acids to the cuticle of rapidly developing embryos.</text>
</comment>
<comment type="tissue specificity">
    <text>Produced by the fat body, where it is cleaved in the rough endoplasmic reticulum or cis-Golgi before being secreted into hemolymph. It is then sequestered by a single class of receptor mediated endocytosis in the ovary.</text>
</comment>
<comment type="induction">
    <text>Synthesized only by sexually mature female after ingestion of blood.</text>
</comment>
<comment type="PTM">
    <text evidence="5">Glycosylated, phosphorylated and sulfated. The large subunit is sulfated more extensively than the small one.</text>
</comment>
<comment type="sequence caution" evidence="8">
    <conflict type="erroneous initiation">
        <sequence resource="EMBL-CDS" id="AAA18221"/>
    </conflict>
</comment>
<comment type="sequence caution" evidence="8">
    <conflict type="erroneous initiation">
        <sequence resource="EMBL-CDS" id="AAA99486"/>
    </conflict>
</comment>
<gene>
    <name type="primary">VGA1</name>
    <name type="ORF">AAEL010434</name>
</gene>
<reference key="1">
    <citation type="journal article" date="1995" name="Insect Biochem. Mol. Biol.">
        <title>Analysis of a vitellogenin gene of the mosquito, Aedes aegypti and comparisons to vitellogenins from other organisms.</title>
        <authorList>
            <person name="Romans P."/>
            <person name="Tu Z.J."/>
            <person name="Ke Z."/>
            <person name="Hagedorn H.H."/>
        </authorList>
    </citation>
    <scope>NUCLEOTIDE SEQUENCE [GENOMIC DNA]</scope>
    <scope>PROTEIN SEQUENCE OF 47-61 AND 490-504</scope>
    <source>
        <strain>Rockefeller</strain>
    </source>
</reference>
<reference key="2">
    <citation type="journal article" date="2007" name="Science">
        <title>Genome sequence of Aedes aegypti, a major arbovirus vector.</title>
        <authorList>
            <person name="Nene V."/>
            <person name="Wortman J.R."/>
            <person name="Lawson D."/>
            <person name="Haas B.J."/>
            <person name="Kodira C.D."/>
            <person name="Tu Z.J."/>
            <person name="Loftus B.J."/>
            <person name="Xi Z."/>
            <person name="Megy K."/>
            <person name="Grabherr M."/>
            <person name="Ren Q."/>
            <person name="Zdobnov E.M."/>
            <person name="Lobo N.F."/>
            <person name="Campbell K.S."/>
            <person name="Brown S.E."/>
            <person name="Bonaldo M.F."/>
            <person name="Zhu J."/>
            <person name="Sinkins S.P."/>
            <person name="Hogenkamp D.G."/>
            <person name="Amedeo P."/>
            <person name="Arensburger P."/>
            <person name="Atkinson P.W."/>
            <person name="Bidwell S.L."/>
            <person name="Biedler J."/>
            <person name="Birney E."/>
            <person name="Bruggner R.V."/>
            <person name="Costas J."/>
            <person name="Coy M.R."/>
            <person name="Crabtree J."/>
            <person name="Crawford M."/>
            <person name="DeBruyn B."/>
            <person name="DeCaprio D."/>
            <person name="Eiglmeier K."/>
            <person name="Eisenstadt E."/>
            <person name="El-Dorry H."/>
            <person name="Gelbart W.M."/>
            <person name="Gomes S.L."/>
            <person name="Hammond M."/>
            <person name="Hannick L.I."/>
            <person name="Hogan J.R."/>
            <person name="Holmes M.H."/>
            <person name="Jaffe D."/>
            <person name="Johnston S.J."/>
            <person name="Kennedy R.C."/>
            <person name="Koo H."/>
            <person name="Kravitz S."/>
            <person name="Kriventseva E.V."/>
            <person name="Kulp D."/>
            <person name="Labutti K."/>
            <person name="Lee E."/>
            <person name="Li S."/>
            <person name="Lovin D.D."/>
            <person name="Mao C."/>
            <person name="Mauceli E."/>
            <person name="Menck C.F."/>
            <person name="Miller J.R."/>
            <person name="Montgomery P."/>
            <person name="Mori A."/>
            <person name="Nascimento A.L."/>
            <person name="Naveira H.F."/>
            <person name="Nusbaum C."/>
            <person name="O'Leary S.B."/>
            <person name="Orvis J."/>
            <person name="Pertea M."/>
            <person name="Quesneville H."/>
            <person name="Reidenbach K.R."/>
            <person name="Rogers Y.-H.C."/>
            <person name="Roth C.W."/>
            <person name="Schneider J.R."/>
            <person name="Schatz M."/>
            <person name="Shumway M."/>
            <person name="Stanke M."/>
            <person name="Stinson E.O."/>
            <person name="Tubio J.M.C."/>
            <person name="Vanzee J.P."/>
            <person name="Verjovski-Almeida S."/>
            <person name="Werner D."/>
            <person name="White O.R."/>
            <person name="Wyder S."/>
            <person name="Zeng Q."/>
            <person name="Zhao Q."/>
            <person name="Zhao Y."/>
            <person name="Hill C.A."/>
            <person name="Raikhel A.S."/>
            <person name="Soares M.B."/>
            <person name="Knudson D.L."/>
            <person name="Lee N.H."/>
            <person name="Galagan J."/>
            <person name="Salzberg S.L."/>
            <person name="Paulsen I.T."/>
            <person name="Dimopoulos G."/>
            <person name="Collins F.H."/>
            <person name="Bruce B."/>
            <person name="Fraser-Liggett C.M."/>
            <person name="Severson D.W."/>
        </authorList>
    </citation>
    <scope>NUCLEOTIDE SEQUENCE [LARGE SCALE GENOMIC DNA]</scope>
    <source>
        <strain>LVPib12</strain>
    </source>
</reference>
<reference key="3">
    <citation type="journal article" date="1994" name="J. Mol. Biol.">
        <title>Analysis of mosquito vitellogenin cDNA. Similarity with vertebrate phosvitins and arthropod serum proteins.</title>
        <authorList>
            <person name="Chen J.-S."/>
            <person name="Cho W.-L."/>
            <person name="Raikhel A.S."/>
        </authorList>
    </citation>
    <scope>NUCLEOTIDE SEQUENCE [MRNA] OF 29-2169</scope>
    <scope>PROTEIN SEQUENCE OF 47-54 AND 490-498</scope>
    <source>
        <strain>UGALS</strain>
        <tissue>Fat body</tissue>
    </source>
</reference>
<reference key="4">
    <citation type="journal article" date="1990" name="J. Biol. Chem.">
        <title>Biosynthesis of mosquito vitellogenin.</title>
        <authorList>
            <person name="Dhadialla T.S."/>
            <person name="Raikhel A.S."/>
        </authorList>
    </citation>
    <scope>SULFATION</scope>
    <source>
        <tissue>Fat body</tissue>
    </source>
</reference>
<dbReference type="EMBL" id="L41842">
    <property type="protein sequence ID" value="AAA99486.1"/>
    <property type="status" value="ALT_INIT"/>
    <property type="molecule type" value="Genomic_DNA"/>
</dbReference>
<dbReference type="EMBL" id="CH477662">
    <property type="protein sequence ID" value="EAT37585.1"/>
    <property type="molecule type" value="Genomic_DNA"/>
</dbReference>
<dbReference type="EMBL" id="U02548">
    <property type="protein sequence ID" value="AAA18221.1"/>
    <property type="status" value="ALT_INIT"/>
    <property type="molecule type" value="mRNA"/>
</dbReference>
<dbReference type="PIR" id="S46404">
    <property type="entry name" value="S46404"/>
</dbReference>
<dbReference type="RefSeq" id="XP_001660818.1">
    <property type="nucleotide sequence ID" value="XM_001660768.1"/>
</dbReference>
<dbReference type="STRING" id="7159.Q16927"/>
<dbReference type="GlyCosmos" id="Q16927">
    <property type="glycosylation" value="16 sites, No reported glycans"/>
</dbReference>
<dbReference type="PaxDb" id="7159-AAEL010434-PA"/>
<dbReference type="GeneID" id="5573342"/>
<dbReference type="KEGG" id="aag:5573342"/>
<dbReference type="VEuPathDB" id="VectorBase:AAEL010434"/>
<dbReference type="eggNOG" id="KOG4338">
    <property type="taxonomic scope" value="Eukaryota"/>
</dbReference>
<dbReference type="HOGENOM" id="CLU_002645_0_0_1"/>
<dbReference type="InParanoid" id="Q16927"/>
<dbReference type="OMA" id="ECWHAVM"/>
<dbReference type="OrthoDB" id="160294at2759"/>
<dbReference type="PhylomeDB" id="Q16927"/>
<dbReference type="Proteomes" id="UP000008820">
    <property type="component" value="Unassembled WGS sequence"/>
</dbReference>
<dbReference type="Proteomes" id="UP000682892">
    <property type="component" value="Chromosome 3"/>
</dbReference>
<dbReference type="GO" id="GO:0005319">
    <property type="term" value="F:lipid transporter activity"/>
    <property type="evidence" value="ECO:0007669"/>
    <property type="project" value="InterPro"/>
</dbReference>
<dbReference type="GO" id="GO:0045735">
    <property type="term" value="F:nutrient reservoir activity"/>
    <property type="evidence" value="ECO:0007669"/>
    <property type="project" value="UniProtKB-KW"/>
</dbReference>
<dbReference type="FunFam" id="1.25.10.20:FF:000003">
    <property type="entry name" value="Vitellogenin C"/>
    <property type="match status" value="1"/>
</dbReference>
<dbReference type="FunFam" id="2.30.230.10:FF:000008">
    <property type="entry name" value="Vitellogenin-like Protein"/>
    <property type="match status" value="1"/>
</dbReference>
<dbReference type="Gene3D" id="2.30.230.10">
    <property type="entry name" value="Lipovitellin, beta-sheet shell regions, chain A"/>
    <property type="match status" value="1"/>
</dbReference>
<dbReference type="Gene3D" id="2.20.80.10">
    <property type="entry name" value="Lipovitellin-phosvitin complex, chain A, domain 4"/>
    <property type="match status" value="1"/>
</dbReference>
<dbReference type="Gene3D" id="1.25.10.20">
    <property type="entry name" value="Vitellinogen, superhelical"/>
    <property type="match status" value="1"/>
</dbReference>
<dbReference type="InterPro" id="IPR015819">
    <property type="entry name" value="Lipid_transp_b-sht_shell"/>
</dbReference>
<dbReference type="InterPro" id="IPR011030">
    <property type="entry name" value="Lipovitellin_superhlx_dom"/>
</dbReference>
<dbReference type="InterPro" id="IPR015816">
    <property type="entry name" value="Vitellinogen_b-sht_N"/>
</dbReference>
<dbReference type="InterPro" id="IPR015255">
    <property type="entry name" value="Vitellinogen_open_b-sht"/>
</dbReference>
<dbReference type="InterPro" id="IPR050733">
    <property type="entry name" value="Vitellogenin/Apolipophorin"/>
</dbReference>
<dbReference type="InterPro" id="IPR001747">
    <property type="entry name" value="Vitellogenin_N"/>
</dbReference>
<dbReference type="InterPro" id="IPR001846">
    <property type="entry name" value="VWF_type-D"/>
</dbReference>
<dbReference type="PANTHER" id="PTHR23345:SF15">
    <property type="entry name" value="VITELLOGENIN 1-RELATED"/>
    <property type="match status" value="1"/>
</dbReference>
<dbReference type="PANTHER" id="PTHR23345">
    <property type="entry name" value="VITELLOGENIN-RELATED"/>
    <property type="match status" value="1"/>
</dbReference>
<dbReference type="Pfam" id="PF09172">
    <property type="entry name" value="Vit_open_b-sht"/>
    <property type="match status" value="1"/>
</dbReference>
<dbReference type="Pfam" id="PF01347">
    <property type="entry name" value="Vitellogenin_N"/>
    <property type="match status" value="2"/>
</dbReference>
<dbReference type="SMART" id="SM01169">
    <property type="entry name" value="DUF1943"/>
    <property type="match status" value="1"/>
</dbReference>
<dbReference type="SMART" id="SM00638">
    <property type="entry name" value="LPD_N"/>
    <property type="match status" value="1"/>
</dbReference>
<dbReference type="SUPFAM" id="SSF56968">
    <property type="entry name" value="Lipovitellin-phosvitin complex, beta-sheet shell regions"/>
    <property type="match status" value="2"/>
</dbReference>
<dbReference type="SUPFAM" id="SSF48431">
    <property type="entry name" value="Lipovitellin-phosvitin complex, superhelical domain"/>
    <property type="match status" value="1"/>
</dbReference>
<dbReference type="PROSITE" id="PS51211">
    <property type="entry name" value="VITELLOGENIN"/>
    <property type="match status" value="1"/>
</dbReference>
<dbReference type="PROSITE" id="PS51233">
    <property type="entry name" value="VWFD"/>
    <property type="match status" value="1"/>
</dbReference>